<protein>
    <recommendedName>
        <fullName>Probable lanosterol 14-alpha demethylase</fullName>
        <ecNumber>1.14.14.154</ecNumber>
    </recommendedName>
    <alternativeName>
        <fullName>CYPLI</fullName>
    </alternativeName>
    <alternativeName>
        <fullName>Cytochrome P450 51</fullName>
    </alternativeName>
    <alternativeName>
        <fullName>Cytochrome P450-14DM</fullName>
    </alternativeName>
    <alternativeName>
        <fullName>Cytochrome P450-LIA1</fullName>
    </alternativeName>
    <alternativeName>
        <fullName>Sterol 14-alpha demethylase</fullName>
    </alternativeName>
</protein>
<proteinExistence type="inferred from homology"/>
<evidence type="ECO:0000250" key="1"/>
<evidence type="ECO:0000269" key="2">
    <source>
    </source>
</evidence>
<evidence type="ECO:0000305" key="3"/>
<sequence length="709" mass="82186">MLFELSIGAIIGFLTLYLLKRFNESKNFITPDNLKKIPIVEGAVPVLGHGPAFSKDIMQFMKNCYKKYGSVFQLKIFRTNMVVLCDRKLSEEFFKSRENDMSLYDVLNRLFFGLAFSDKPDSLEFIIKMVKKTITIRYDDFAPKIMDEAQRLTKIMRESHSGKKLDMIPEIIKFVSRTSARCFIAMDIDDEFYDALNKFTNLLNKIVVLTYFVPHWLLNATLNRFMLRKYRMRMTKLLENEIEKYRTDLNKSDSLLFRKCVDHIDPETGATLTNQDIGDIVVCLLYVSSENTSLLATNCLIDLTLNPKYWDLIKSECSAMIALGDYKNLFKAPLLNSIVMESARLNSHVFALARKPKTVNRIGDYFVADNVDTISLCEPALMKFEIASDVYANPNSYDPVRFMAPRNEPKDSGHVMNWGKGVHECPGKQFAIYEVKAAIAYIVTNFERFEFNHNDLKINYFSPSAMCEKNISVEFIPSQQNIHNIVYKDRTYIVEHIKCNETSAWLIYNALDRQQQREYYQYTYEISTDSQEHKLIEKAGPHKPFPIAYDKLVYTGQSNCMTPTKWYDFASDIWELLTENYAELGFPIYDDKIRNFVPNSFYGQLYSVESIMPTHRDQHVDYGLSISIGSNCEFVIEDKTILLPSGSVLIGDFSKISHSVSKIFHEKPDHLSDFEFFNRVRFSAQIRSIDPDVQPLMTTQEFLDMISEY</sequence>
<organismHost>
    <name type="scientific">Acanthamoeba polyphaga</name>
    <name type="common">Amoeba</name>
    <dbReference type="NCBI Taxonomy" id="5757"/>
</organismHost>
<comment type="function">
    <text evidence="1 2">Catalyzes the 14-alpha demethylation of obtusifoliol to 4 alpha-methyl-5 alpha-ergosta-8,14,24(28)-trien-3 beta-ol.</text>
</comment>
<comment type="catalytic activity">
    <reaction>
        <text>a 14alpha-methyl steroid + 3 reduced [NADPH--hemoprotein reductase] + 3 O2 = a Delta(14) steroid + formate + 3 oxidized [NADPH--hemoprotein reductase] + 4 H2O + 4 H(+)</text>
        <dbReference type="Rhea" id="RHEA:54028"/>
        <dbReference type="Rhea" id="RHEA-COMP:11964"/>
        <dbReference type="Rhea" id="RHEA-COMP:11965"/>
        <dbReference type="ChEBI" id="CHEBI:15377"/>
        <dbReference type="ChEBI" id="CHEBI:15378"/>
        <dbReference type="ChEBI" id="CHEBI:15379"/>
        <dbReference type="ChEBI" id="CHEBI:15740"/>
        <dbReference type="ChEBI" id="CHEBI:57618"/>
        <dbReference type="ChEBI" id="CHEBI:58210"/>
        <dbReference type="ChEBI" id="CHEBI:138029"/>
        <dbReference type="ChEBI" id="CHEBI:138031"/>
        <dbReference type="EC" id="1.14.14.154"/>
    </reaction>
</comment>
<comment type="cofactor">
    <cofactor evidence="1">
        <name>heme</name>
        <dbReference type="ChEBI" id="CHEBI:30413"/>
    </cofactor>
</comment>
<comment type="pathway">
    <text>Steroid biosynthesis; zymosterol biosynthesis; zymosterol from lanosterol: step 1/6.</text>
</comment>
<comment type="subcellular location">
    <subcellularLocation>
        <location evidence="3">Membrane</location>
    </subcellularLocation>
</comment>
<comment type="similarity">
    <text evidence="3">Belongs to the cytochrome P450 family.</text>
</comment>
<accession>Q5UQI3</accession>
<gene>
    <name type="ordered locus">MIMI_L808</name>
</gene>
<dbReference type="EC" id="1.14.14.154"/>
<dbReference type="EMBL" id="AY653733">
    <property type="protein sequence ID" value="AAV51068.1"/>
    <property type="molecule type" value="Genomic_DNA"/>
</dbReference>
<dbReference type="SMR" id="Q5UQI3"/>
<dbReference type="KEGG" id="vg:9925470"/>
<dbReference type="OrthoDB" id="29450at10239"/>
<dbReference type="UniPathway" id="UPA00770">
    <property type="reaction ID" value="UER00754"/>
</dbReference>
<dbReference type="Proteomes" id="UP000001134">
    <property type="component" value="Genome"/>
</dbReference>
<dbReference type="GO" id="GO:0016020">
    <property type="term" value="C:membrane"/>
    <property type="evidence" value="ECO:0007669"/>
    <property type="project" value="UniProtKB-SubCell"/>
</dbReference>
<dbReference type="GO" id="GO:0020037">
    <property type="term" value="F:heme binding"/>
    <property type="evidence" value="ECO:0007669"/>
    <property type="project" value="InterPro"/>
</dbReference>
<dbReference type="GO" id="GO:0005506">
    <property type="term" value="F:iron ion binding"/>
    <property type="evidence" value="ECO:0007669"/>
    <property type="project" value="InterPro"/>
</dbReference>
<dbReference type="GO" id="GO:0008168">
    <property type="term" value="F:methyltransferase activity"/>
    <property type="evidence" value="ECO:0007669"/>
    <property type="project" value="UniProtKB-KW"/>
</dbReference>
<dbReference type="GO" id="GO:0008398">
    <property type="term" value="F:sterol 14-demethylase activity"/>
    <property type="evidence" value="ECO:0007669"/>
    <property type="project" value="UniProtKB-EC"/>
</dbReference>
<dbReference type="GO" id="GO:0032259">
    <property type="term" value="P:methylation"/>
    <property type="evidence" value="ECO:0007669"/>
    <property type="project" value="UniProtKB-KW"/>
</dbReference>
<dbReference type="GO" id="GO:0016126">
    <property type="term" value="P:sterol biosynthetic process"/>
    <property type="evidence" value="ECO:0007669"/>
    <property type="project" value="UniProtKB-KW"/>
</dbReference>
<dbReference type="CDD" id="cd11041">
    <property type="entry name" value="CYP503A1-like"/>
    <property type="match status" value="1"/>
</dbReference>
<dbReference type="Gene3D" id="2.60.120.590">
    <property type="entry name" value="Alpha-ketoglutarate-dependent dioxygenase AlkB-like"/>
    <property type="match status" value="1"/>
</dbReference>
<dbReference type="Gene3D" id="1.10.630.10">
    <property type="entry name" value="Cytochrome P450"/>
    <property type="match status" value="1"/>
</dbReference>
<dbReference type="InterPro" id="IPR037151">
    <property type="entry name" value="AlkB-like_sf"/>
</dbReference>
<dbReference type="InterPro" id="IPR050529">
    <property type="entry name" value="CYP450_sterol_14alpha_dmase"/>
</dbReference>
<dbReference type="InterPro" id="IPR001128">
    <property type="entry name" value="Cyt_P450"/>
</dbReference>
<dbReference type="InterPro" id="IPR017972">
    <property type="entry name" value="Cyt_P450_CS"/>
</dbReference>
<dbReference type="InterPro" id="IPR002403">
    <property type="entry name" value="Cyt_P450_E_grp-IV"/>
</dbReference>
<dbReference type="InterPro" id="IPR036396">
    <property type="entry name" value="Cyt_P450_sf"/>
</dbReference>
<dbReference type="PANTHER" id="PTHR24304:SF2">
    <property type="entry name" value="24-HYDROXYCHOLESTEROL 7-ALPHA-HYDROXYLASE"/>
    <property type="match status" value="1"/>
</dbReference>
<dbReference type="PANTHER" id="PTHR24304">
    <property type="entry name" value="CYTOCHROME P450 FAMILY 7"/>
    <property type="match status" value="1"/>
</dbReference>
<dbReference type="Pfam" id="PF00067">
    <property type="entry name" value="p450"/>
    <property type="match status" value="1"/>
</dbReference>
<dbReference type="PRINTS" id="PR00465">
    <property type="entry name" value="EP450IV"/>
</dbReference>
<dbReference type="SUPFAM" id="SSF51197">
    <property type="entry name" value="Clavaminate synthase-like"/>
    <property type="match status" value="1"/>
</dbReference>
<dbReference type="SUPFAM" id="SSF48264">
    <property type="entry name" value="Cytochrome P450"/>
    <property type="match status" value="1"/>
</dbReference>
<dbReference type="PROSITE" id="PS00086">
    <property type="entry name" value="CYTOCHROME_P450"/>
    <property type="match status" value="1"/>
</dbReference>
<reference key="1">
    <citation type="journal article" date="2004" name="Science">
        <title>The 1.2-megabase genome sequence of Mimivirus.</title>
        <authorList>
            <person name="Raoult D."/>
            <person name="Audic S."/>
            <person name="Robert C."/>
            <person name="Abergel C."/>
            <person name="Renesto P."/>
            <person name="Ogata H."/>
            <person name="La Scola B."/>
            <person name="Susan M."/>
            <person name="Claverie J.-M."/>
        </authorList>
    </citation>
    <scope>NUCLEOTIDE SEQUENCE [LARGE SCALE GENOMIC DNA]</scope>
    <source>
        <strain>Rowbotham-Bradford</strain>
    </source>
</reference>
<reference key="2">
    <citation type="journal article" date="2009" name="J. Virol.">
        <title>The first virally encoded cytochrome p450.</title>
        <authorList>
            <person name="Lamb D.C."/>
            <person name="Lei L."/>
            <person name="Warrilow A.G."/>
            <person name="Lepesheva G.I."/>
            <person name="Mullins J.G."/>
            <person name="Waterman M.R."/>
            <person name="Kelly S.L."/>
        </authorList>
    </citation>
    <scope>FUNCTION</scope>
    <source>
        <strain>Rowbotham-Bradford</strain>
    </source>
</reference>
<feature type="chain" id="PRO_0000052015" description="Probable lanosterol 14-alpha demethylase">
    <location>
        <begin position="1"/>
        <end position="709"/>
    </location>
</feature>
<feature type="binding site" description="axial binding residue" evidence="1">
    <location>
        <position position="425"/>
    </location>
    <ligand>
        <name>heme</name>
        <dbReference type="ChEBI" id="CHEBI:30413"/>
    </ligand>
    <ligandPart>
        <name>Fe</name>
        <dbReference type="ChEBI" id="CHEBI:18248"/>
    </ligandPart>
</feature>
<name>CP51_MIMIV</name>
<organism>
    <name type="scientific">Acanthamoeba polyphaga mimivirus</name>
    <name type="common">APMV</name>
    <dbReference type="NCBI Taxonomy" id="212035"/>
    <lineage>
        <taxon>Viruses</taxon>
        <taxon>Varidnaviria</taxon>
        <taxon>Bamfordvirae</taxon>
        <taxon>Nucleocytoviricota</taxon>
        <taxon>Megaviricetes</taxon>
        <taxon>Imitervirales</taxon>
        <taxon>Mimiviridae</taxon>
        <taxon>Megamimivirinae</taxon>
        <taxon>Mimivirus</taxon>
        <taxon>Mimivirus bradfordmassiliense</taxon>
    </lineage>
</organism>
<keyword id="KW-0349">Heme</keyword>
<keyword id="KW-0408">Iron</keyword>
<keyword id="KW-0444">Lipid biosynthesis</keyword>
<keyword id="KW-0443">Lipid metabolism</keyword>
<keyword id="KW-0472">Membrane</keyword>
<keyword id="KW-0479">Metal-binding</keyword>
<keyword id="KW-0489">Methyltransferase</keyword>
<keyword id="KW-0503">Monooxygenase</keyword>
<keyword id="KW-0560">Oxidoreductase</keyword>
<keyword id="KW-1185">Reference proteome</keyword>
<keyword id="KW-0752">Steroid biosynthesis</keyword>
<keyword id="KW-0753">Steroid metabolism</keyword>
<keyword id="KW-0756">Sterol biosynthesis</keyword>
<keyword id="KW-1207">Sterol metabolism</keyword>
<keyword id="KW-0808">Transferase</keyword>